<accession>A4G9I2</accession>
<dbReference type="EMBL" id="CU207211">
    <property type="protein sequence ID" value="CAL63169.1"/>
    <property type="molecule type" value="Genomic_DNA"/>
</dbReference>
<dbReference type="SMR" id="A4G9I2"/>
<dbReference type="STRING" id="204773.HEAR3060"/>
<dbReference type="KEGG" id="har:HEAR3060"/>
<dbReference type="eggNOG" id="COG1826">
    <property type="taxonomic scope" value="Bacteria"/>
</dbReference>
<dbReference type="HOGENOM" id="CLU_086034_5_3_4"/>
<dbReference type="OrthoDB" id="7066617at2"/>
<dbReference type="Proteomes" id="UP000006697">
    <property type="component" value="Chromosome"/>
</dbReference>
<dbReference type="GO" id="GO:0033281">
    <property type="term" value="C:TAT protein transport complex"/>
    <property type="evidence" value="ECO:0007669"/>
    <property type="project" value="UniProtKB-UniRule"/>
</dbReference>
<dbReference type="GO" id="GO:0008320">
    <property type="term" value="F:protein transmembrane transporter activity"/>
    <property type="evidence" value="ECO:0007669"/>
    <property type="project" value="UniProtKB-UniRule"/>
</dbReference>
<dbReference type="GO" id="GO:0043953">
    <property type="term" value="P:protein transport by the Tat complex"/>
    <property type="evidence" value="ECO:0007669"/>
    <property type="project" value="UniProtKB-UniRule"/>
</dbReference>
<dbReference type="Gene3D" id="1.20.5.3310">
    <property type="match status" value="1"/>
</dbReference>
<dbReference type="HAMAP" id="MF_00236">
    <property type="entry name" value="TatA_E"/>
    <property type="match status" value="1"/>
</dbReference>
<dbReference type="InterPro" id="IPR003369">
    <property type="entry name" value="TatA/B/E"/>
</dbReference>
<dbReference type="InterPro" id="IPR006312">
    <property type="entry name" value="TatA/E"/>
</dbReference>
<dbReference type="NCBIfam" id="NF002813">
    <property type="entry name" value="PRK02958.1"/>
    <property type="match status" value="1"/>
</dbReference>
<dbReference type="NCBIfam" id="TIGR01411">
    <property type="entry name" value="tatAE"/>
    <property type="match status" value="1"/>
</dbReference>
<dbReference type="PANTHER" id="PTHR42982">
    <property type="entry name" value="SEC-INDEPENDENT PROTEIN TRANSLOCASE PROTEIN TATA"/>
    <property type="match status" value="1"/>
</dbReference>
<dbReference type="PANTHER" id="PTHR42982:SF1">
    <property type="entry name" value="SEC-INDEPENDENT PROTEIN TRANSLOCASE PROTEIN TATA"/>
    <property type="match status" value="1"/>
</dbReference>
<dbReference type="Pfam" id="PF02416">
    <property type="entry name" value="TatA_B_E"/>
    <property type="match status" value="1"/>
</dbReference>
<organism>
    <name type="scientific">Herminiimonas arsenicoxydans</name>
    <dbReference type="NCBI Taxonomy" id="204773"/>
    <lineage>
        <taxon>Bacteria</taxon>
        <taxon>Pseudomonadati</taxon>
        <taxon>Pseudomonadota</taxon>
        <taxon>Betaproteobacteria</taxon>
        <taxon>Burkholderiales</taxon>
        <taxon>Oxalobacteraceae</taxon>
        <taxon>Herminiimonas</taxon>
    </lineage>
</organism>
<name>TATA_HERAR</name>
<feature type="chain" id="PRO_1000044392" description="Sec-independent protein translocase protein TatA">
    <location>
        <begin position="1"/>
        <end position="76"/>
    </location>
</feature>
<feature type="transmembrane region" description="Helical" evidence="1">
    <location>
        <begin position="1"/>
        <end position="21"/>
    </location>
</feature>
<feature type="region of interest" description="Disordered" evidence="2">
    <location>
        <begin position="39"/>
        <end position="76"/>
    </location>
</feature>
<feature type="compositionally biased region" description="Basic and acidic residues" evidence="2">
    <location>
        <begin position="39"/>
        <end position="50"/>
    </location>
</feature>
<feature type="compositionally biased region" description="Basic and acidic residues" evidence="2">
    <location>
        <begin position="64"/>
        <end position="76"/>
    </location>
</feature>
<protein>
    <recommendedName>
        <fullName evidence="1">Sec-independent protein translocase protein TatA</fullName>
    </recommendedName>
</protein>
<comment type="function">
    <text evidence="1">Part of the twin-arginine translocation (Tat) system that transports large folded proteins containing a characteristic twin-arginine motif in their signal peptide across membranes. TatA could form the protein-conducting channel of the Tat system.</text>
</comment>
<comment type="subunit">
    <text evidence="1">The Tat system comprises two distinct complexes: a TatABC complex, containing multiple copies of TatA, TatB and TatC subunits, and a separate TatA complex, containing only TatA subunits. Substrates initially bind to the TatABC complex, which probably triggers association of the separate TatA complex to form the active translocon.</text>
</comment>
<comment type="subcellular location">
    <subcellularLocation>
        <location evidence="1">Cell inner membrane</location>
        <topology evidence="1">Single-pass membrane protein</topology>
    </subcellularLocation>
</comment>
<comment type="similarity">
    <text evidence="1">Belongs to the TatA/E family.</text>
</comment>
<keyword id="KW-0997">Cell inner membrane</keyword>
<keyword id="KW-1003">Cell membrane</keyword>
<keyword id="KW-0472">Membrane</keyword>
<keyword id="KW-0653">Protein transport</keyword>
<keyword id="KW-1185">Reference proteome</keyword>
<keyword id="KW-0811">Translocation</keyword>
<keyword id="KW-0812">Transmembrane</keyword>
<keyword id="KW-1133">Transmembrane helix</keyword>
<keyword id="KW-0813">Transport</keyword>
<sequence length="76" mass="8021">MGSFSIWHWLIVLVIVALVFGTKKIGSMGTDVGKAVKGFKDGMKGEDDKPAAQNAAPSQVADKGTVDVEVKEKSNS</sequence>
<evidence type="ECO:0000255" key="1">
    <source>
        <dbReference type="HAMAP-Rule" id="MF_00236"/>
    </source>
</evidence>
<evidence type="ECO:0000256" key="2">
    <source>
        <dbReference type="SAM" id="MobiDB-lite"/>
    </source>
</evidence>
<reference key="1">
    <citation type="journal article" date="2007" name="PLoS Genet.">
        <title>A tale of two oxidation states: bacterial colonization of arsenic-rich environments.</title>
        <authorList>
            <person name="Muller D."/>
            <person name="Medigue C."/>
            <person name="Koechler S."/>
            <person name="Barbe V."/>
            <person name="Barakat M."/>
            <person name="Talla E."/>
            <person name="Bonnefoy V."/>
            <person name="Krin E."/>
            <person name="Arsene-Ploetze F."/>
            <person name="Carapito C."/>
            <person name="Chandler M."/>
            <person name="Cournoyer B."/>
            <person name="Cruveiller S."/>
            <person name="Dossat C."/>
            <person name="Duval S."/>
            <person name="Heymann M."/>
            <person name="Leize E."/>
            <person name="Lieutaud A."/>
            <person name="Lievremont D."/>
            <person name="Makita Y."/>
            <person name="Mangenot S."/>
            <person name="Nitschke W."/>
            <person name="Ortet P."/>
            <person name="Perdrial N."/>
            <person name="Schoepp B."/>
            <person name="Siguier P."/>
            <person name="Simeonova D.D."/>
            <person name="Rouy Z."/>
            <person name="Segurens B."/>
            <person name="Turlin E."/>
            <person name="Vallenet D."/>
            <person name="van Dorsselaer A."/>
            <person name="Weiss S."/>
            <person name="Weissenbach J."/>
            <person name="Lett M.-C."/>
            <person name="Danchin A."/>
            <person name="Bertin P.N."/>
        </authorList>
    </citation>
    <scope>NUCLEOTIDE SEQUENCE [LARGE SCALE GENOMIC DNA]</scope>
    <source>
        <strain>ULPAs1</strain>
    </source>
</reference>
<gene>
    <name evidence="1" type="primary">tatA</name>
    <name type="ordered locus">HEAR3060</name>
</gene>
<proteinExistence type="inferred from homology"/>